<evidence type="ECO:0000255" key="1">
    <source>
        <dbReference type="HAMAP-Rule" id="MF_00121"/>
    </source>
</evidence>
<sequence>MATQWEVVIGLETHAQLSTVSKIFSGASTQFGAEPNTQACPVDLALPGVLPVLNRGAVERAIRFGLAIGSTIAPRSIFARKNYFYPDLPKGYQISQYEIPVVQGGQITIQVPANEKAGKDAYEKTVNLTRAHLEEDAGKSLHEDFAGMTGIDLNRAGTPLLEIVTEPEMRSAAEAVAYAKALHGLVVWLGICDGNMQEGSFRCDANVSVRPIGQEKFGTRAEIKNLNSFRFLEEAINFEVRRQIELIEDGGEVVQETRLYDPDKRETRSMRSKEDAHDYRYFPDPDLMPLVIGQDWIERVQSGMPELPAAMQQRFADEYGVSAYDAGVLTSSKAMAAYFEAVVAKAGTANAKIAANWLMGDVSSQLNRDGIEIDAIPVSAAQLALVLQRIADGTISNKIAKEIFTTIWDEKADDEGAADRIIDAKGLKQISDTGALEAIIDEVLAANAKSVEEFRAGKEKAFNALIGQAMKATKGKANPQQVNELLKKKLG</sequence>
<organism>
    <name type="scientific">Burkholderia lata (strain ATCC 17760 / DSM 23089 / LMG 22485 / NCIMB 9086 / R18194 / 383)</name>
    <dbReference type="NCBI Taxonomy" id="482957"/>
    <lineage>
        <taxon>Bacteria</taxon>
        <taxon>Pseudomonadati</taxon>
        <taxon>Pseudomonadota</taxon>
        <taxon>Betaproteobacteria</taxon>
        <taxon>Burkholderiales</taxon>
        <taxon>Burkholderiaceae</taxon>
        <taxon>Burkholderia</taxon>
        <taxon>Burkholderia cepacia complex</taxon>
    </lineage>
</organism>
<accession>Q39BW4</accession>
<comment type="function">
    <text evidence="1">Allows the formation of correctly charged Asn-tRNA(Asn) or Gln-tRNA(Gln) through the transamidation of misacylated Asp-tRNA(Asn) or Glu-tRNA(Gln) in organisms which lack either or both of asparaginyl-tRNA or glutaminyl-tRNA synthetases. The reaction takes place in the presence of glutamine and ATP through an activated phospho-Asp-tRNA(Asn) or phospho-Glu-tRNA(Gln).</text>
</comment>
<comment type="catalytic activity">
    <reaction evidence="1">
        <text>L-glutamyl-tRNA(Gln) + L-glutamine + ATP + H2O = L-glutaminyl-tRNA(Gln) + L-glutamate + ADP + phosphate + H(+)</text>
        <dbReference type="Rhea" id="RHEA:17521"/>
        <dbReference type="Rhea" id="RHEA-COMP:9681"/>
        <dbReference type="Rhea" id="RHEA-COMP:9684"/>
        <dbReference type="ChEBI" id="CHEBI:15377"/>
        <dbReference type="ChEBI" id="CHEBI:15378"/>
        <dbReference type="ChEBI" id="CHEBI:29985"/>
        <dbReference type="ChEBI" id="CHEBI:30616"/>
        <dbReference type="ChEBI" id="CHEBI:43474"/>
        <dbReference type="ChEBI" id="CHEBI:58359"/>
        <dbReference type="ChEBI" id="CHEBI:78520"/>
        <dbReference type="ChEBI" id="CHEBI:78521"/>
        <dbReference type="ChEBI" id="CHEBI:456216"/>
    </reaction>
</comment>
<comment type="catalytic activity">
    <reaction evidence="1">
        <text>L-aspartyl-tRNA(Asn) + L-glutamine + ATP + H2O = L-asparaginyl-tRNA(Asn) + L-glutamate + ADP + phosphate + 2 H(+)</text>
        <dbReference type="Rhea" id="RHEA:14513"/>
        <dbReference type="Rhea" id="RHEA-COMP:9674"/>
        <dbReference type="Rhea" id="RHEA-COMP:9677"/>
        <dbReference type="ChEBI" id="CHEBI:15377"/>
        <dbReference type="ChEBI" id="CHEBI:15378"/>
        <dbReference type="ChEBI" id="CHEBI:29985"/>
        <dbReference type="ChEBI" id="CHEBI:30616"/>
        <dbReference type="ChEBI" id="CHEBI:43474"/>
        <dbReference type="ChEBI" id="CHEBI:58359"/>
        <dbReference type="ChEBI" id="CHEBI:78515"/>
        <dbReference type="ChEBI" id="CHEBI:78516"/>
        <dbReference type="ChEBI" id="CHEBI:456216"/>
    </reaction>
</comment>
<comment type="subunit">
    <text evidence="1">Heterotrimer of A, B and C subunits.</text>
</comment>
<comment type="similarity">
    <text evidence="1">Belongs to the GatB/GatE family. GatB subfamily.</text>
</comment>
<feature type="chain" id="PRO_0000241205" description="Aspartyl/glutamyl-tRNA(Asn/Gln) amidotransferase subunit B">
    <location>
        <begin position="1"/>
        <end position="491"/>
    </location>
</feature>
<keyword id="KW-0067">ATP-binding</keyword>
<keyword id="KW-0436">Ligase</keyword>
<keyword id="KW-0547">Nucleotide-binding</keyword>
<keyword id="KW-0648">Protein biosynthesis</keyword>
<gene>
    <name evidence="1" type="primary">gatB</name>
    <name type="ordered locus">Bcep18194_A6458</name>
</gene>
<reference key="1">
    <citation type="submission" date="2005-10" db="EMBL/GenBank/DDBJ databases">
        <title>Complete sequence of chromosome 1 of Burkholderia sp. 383.</title>
        <authorList>
            <consortium name="US DOE Joint Genome Institute"/>
            <person name="Copeland A."/>
            <person name="Lucas S."/>
            <person name="Lapidus A."/>
            <person name="Barry K."/>
            <person name="Detter J.C."/>
            <person name="Glavina T."/>
            <person name="Hammon N."/>
            <person name="Israni S."/>
            <person name="Pitluck S."/>
            <person name="Chain P."/>
            <person name="Malfatti S."/>
            <person name="Shin M."/>
            <person name="Vergez L."/>
            <person name="Schmutz J."/>
            <person name="Larimer F."/>
            <person name="Land M."/>
            <person name="Kyrpides N."/>
            <person name="Lykidis A."/>
            <person name="Richardson P."/>
        </authorList>
    </citation>
    <scope>NUCLEOTIDE SEQUENCE [LARGE SCALE GENOMIC DNA]</scope>
    <source>
        <strain>ATCC 17760 / DSM 23089 / LMG 22485 / NCIMB 9086 / R18194 / 383</strain>
    </source>
</reference>
<proteinExistence type="inferred from homology"/>
<name>GATB_BURL3</name>
<protein>
    <recommendedName>
        <fullName evidence="1">Aspartyl/glutamyl-tRNA(Asn/Gln) amidotransferase subunit B</fullName>
        <shortName evidence="1">Asp/Glu-ADT subunit B</shortName>
        <ecNumber evidence="1">6.3.5.-</ecNumber>
    </recommendedName>
</protein>
<dbReference type="EC" id="6.3.5.-" evidence="1"/>
<dbReference type="EMBL" id="CP000151">
    <property type="protein sequence ID" value="ABB10052.1"/>
    <property type="molecule type" value="Genomic_DNA"/>
</dbReference>
<dbReference type="RefSeq" id="WP_011353555.1">
    <property type="nucleotide sequence ID" value="NC_007510.1"/>
</dbReference>
<dbReference type="SMR" id="Q39BW4"/>
<dbReference type="GeneID" id="45096328"/>
<dbReference type="KEGG" id="bur:Bcep18194_A6458"/>
<dbReference type="PATRIC" id="fig|482957.22.peg.3490"/>
<dbReference type="HOGENOM" id="CLU_019240_0_0_4"/>
<dbReference type="Proteomes" id="UP000002705">
    <property type="component" value="Chromosome 1"/>
</dbReference>
<dbReference type="GO" id="GO:0050566">
    <property type="term" value="F:asparaginyl-tRNA synthase (glutamine-hydrolyzing) activity"/>
    <property type="evidence" value="ECO:0007669"/>
    <property type="project" value="RHEA"/>
</dbReference>
<dbReference type="GO" id="GO:0005524">
    <property type="term" value="F:ATP binding"/>
    <property type="evidence" value="ECO:0007669"/>
    <property type="project" value="UniProtKB-KW"/>
</dbReference>
<dbReference type="GO" id="GO:0050567">
    <property type="term" value="F:glutaminyl-tRNA synthase (glutamine-hydrolyzing) activity"/>
    <property type="evidence" value="ECO:0007669"/>
    <property type="project" value="UniProtKB-UniRule"/>
</dbReference>
<dbReference type="GO" id="GO:0070681">
    <property type="term" value="P:glutaminyl-tRNAGln biosynthesis via transamidation"/>
    <property type="evidence" value="ECO:0007669"/>
    <property type="project" value="TreeGrafter"/>
</dbReference>
<dbReference type="GO" id="GO:0006412">
    <property type="term" value="P:translation"/>
    <property type="evidence" value="ECO:0007669"/>
    <property type="project" value="UniProtKB-UniRule"/>
</dbReference>
<dbReference type="FunFam" id="1.10.10.410:FF:000001">
    <property type="entry name" value="Aspartyl/glutamyl-tRNA(Asn/Gln) amidotransferase subunit B"/>
    <property type="match status" value="1"/>
</dbReference>
<dbReference type="FunFam" id="1.10.150.380:FF:000001">
    <property type="entry name" value="Aspartyl/glutamyl-tRNA(Asn/Gln) amidotransferase subunit B"/>
    <property type="match status" value="1"/>
</dbReference>
<dbReference type="Gene3D" id="1.10.10.410">
    <property type="match status" value="1"/>
</dbReference>
<dbReference type="Gene3D" id="1.10.150.380">
    <property type="entry name" value="GatB domain, N-terminal subdomain"/>
    <property type="match status" value="1"/>
</dbReference>
<dbReference type="HAMAP" id="MF_00121">
    <property type="entry name" value="GatB"/>
    <property type="match status" value="1"/>
</dbReference>
<dbReference type="InterPro" id="IPR017959">
    <property type="entry name" value="Asn/Gln-tRNA_amidoTrfase_suB/E"/>
</dbReference>
<dbReference type="InterPro" id="IPR006075">
    <property type="entry name" value="Asn/Gln-tRNA_Trfase_suB/E_cat"/>
</dbReference>
<dbReference type="InterPro" id="IPR018027">
    <property type="entry name" value="Asn/Gln_amidotransferase"/>
</dbReference>
<dbReference type="InterPro" id="IPR003789">
    <property type="entry name" value="Asn/Gln_tRNA_amidoTrase-B-like"/>
</dbReference>
<dbReference type="InterPro" id="IPR004413">
    <property type="entry name" value="GatB"/>
</dbReference>
<dbReference type="InterPro" id="IPR042114">
    <property type="entry name" value="GatB_C_1"/>
</dbReference>
<dbReference type="InterPro" id="IPR023168">
    <property type="entry name" value="GatB_Yqey_C_2"/>
</dbReference>
<dbReference type="InterPro" id="IPR017958">
    <property type="entry name" value="Gln-tRNA_amidoTrfase_suB_CS"/>
</dbReference>
<dbReference type="InterPro" id="IPR014746">
    <property type="entry name" value="Gln_synth/guanido_kin_cat_dom"/>
</dbReference>
<dbReference type="NCBIfam" id="TIGR00133">
    <property type="entry name" value="gatB"/>
    <property type="match status" value="1"/>
</dbReference>
<dbReference type="NCBIfam" id="NF004012">
    <property type="entry name" value="PRK05477.1-2"/>
    <property type="match status" value="1"/>
</dbReference>
<dbReference type="NCBIfam" id="NF004014">
    <property type="entry name" value="PRK05477.1-4"/>
    <property type="match status" value="1"/>
</dbReference>
<dbReference type="NCBIfam" id="NF004015">
    <property type="entry name" value="PRK05477.1-5"/>
    <property type="match status" value="1"/>
</dbReference>
<dbReference type="PANTHER" id="PTHR11659">
    <property type="entry name" value="GLUTAMYL-TRNA GLN AMIDOTRANSFERASE SUBUNIT B MITOCHONDRIAL AND PROKARYOTIC PET112-RELATED"/>
    <property type="match status" value="1"/>
</dbReference>
<dbReference type="PANTHER" id="PTHR11659:SF0">
    <property type="entry name" value="GLUTAMYL-TRNA(GLN) AMIDOTRANSFERASE SUBUNIT B, MITOCHONDRIAL"/>
    <property type="match status" value="1"/>
</dbReference>
<dbReference type="Pfam" id="PF02934">
    <property type="entry name" value="GatB_N"/>
    <property type="match status" value="1"/>
</dbReference>
<dbReference type="Pfam" id="PF02637">
    <property type="entry name" value="GatB_Yqey"/>
    <property type="match status" value="1"/>
</dbReference>
<dbReference type="SMART" id="SM00845">
    <property type="entry name" value="GatB_Yqey"/>
    <property type="match status" value="1"/>
</dbReference>
<dbReference type="SUPFAM" id="SSF89095">
    <property type="entry name" value="GatB/YqeY motif"/>
    <property type="match status" value="1"/>
</dbReference>
<dbReference type="SUPFAM" id="SSF55931">
    <property type="entry name" value="Glutamine synthetase/guanido kinase"/>
    <property type="match status" value="1"/>
</dbReference>
<dbReference type="PROSITE" id="PS01234">
    <property type="entry name" value="GATB"/>
    <property type="match status" value="1"/>
</dbReference>